<organism>
    <name type="scientific">Delftia acidovorans (strain DSM 14801 / SPH-1)</name>
    <dbReference type="NCBI Taxonomy" id="398578"/>
    <lineage>
        <taxon>Bacteria</taxon>
        <taxon>Pseudomonadati</taxon>
        <taxon>Pseudomonadota</taxon>
        <taxon>Betaproteobacteria</taxon>
        <taxon>Burkholderiales</taxon>
        <taxon>Comamonadaceae</taxon>
        <taxon>Delftia</taxon>
    </lineage>
</organism>
<accession>A9C3D0</accession>
<sequence>MNELDSLVESAQQLFAQAQTPADLENAKAQFLGKSGKVTELMKGMAQLSVEEKKSRGAAINVAKQGIEAALTARRKALADAELQAHLKAEVLDVTLPGRRRGQGGLHPVSLTLERIEGIFGSMGFDVAEGPEIESDWFNFTALNTPEDHPARSMHDTFYVEGGTEQAPNLLRTHTSPMQVRHAVQHVKKYRERLDAGQGMPEIRVIAPGRTYRVDSDATHSPMFHQCEGLWIGENVSFKDLKVVFTDFCKTFFESDDLVLRFRPSFFPFTEPSAEIDIQFQSGPLAGRWLEVAGSGQVHPNVVRNMGLDPEKYIGFAFGMGPDRLTMLRYGVNDLRLFFDGDIRFLSQFR</sequence>
<protein>
    <recommendedName>
        <fullName evidence="1">Phenylalanine--tRNA ligase alpha subunit</fullName>
        <ecNumber evidence="1">6.1.1.20</ecNumber>
    </recommendedName>
    <alternativeName>
        <fullName evidence="1">Phenylalanyl-tRNA synthetase alpha subunit</fullName>
        <shortName evidence="1">PheRS</shortName>
    </alternativeName>
</protein>
<proteinExistence type="inferred from homology"/>
<comment type="catalytic activity">
    <reaction evidence="1">
        <text>tRNA(Phe) + L-phenylalanine + ATP = L-phenylalanyl-tRNA(Phe) + AMP + diphosphate + H(+)</text>
        <dbReference type="Rhea" id="RHEA:19413"/>
        <dbReference type="Rhea" id="RHEA-COMP:9668"/>
        <dbReference type="Rhea" id="RHEA-COMP:9699"/>
        <dbReference type="ChEBI" id="CHEBI:15378"/>
        <dbReference type="ChEBI" id="CHEBI:30616"/>
        <dbReference type="ChEBI" id="CHEBI:33019"/>
        <dbReference type="ChEBI" id="CHEBI:58095"/>
        <dbReference type="ChEBI" id="CHEBI:78442"/>
        <dbReference type="ChEBI" id="CHEBI:78531"/>
        <dbReference type="ChEBI" id="CHEBI:456215"/>
        <dbReference type="EC" id="6.1.1.20"/>
    </reaction>
</comment>
<comment type="cofactor">
    <cofactor evidence="1">
        <name>Mg(2+)</name>
        <dbReference type="ChEBI" id="CHEBI:18420"/>
    </cofactor>
    <text evidence="1">Binds 2 magnesium ions per tetramer.</text>
</comment>
<comment type="subunit">
    <text evidence="1">Tetramer of two alpha and two beta subunits.</text>
</comment>
<comment type="subcellular location">
    <subcellularLocation>
        <location evidence="1">Cytoplasm</location>
    </subcellularLocation>
</comment>
<comment type="similarity">
    <text evidence="1">Belongs to the class-II aminoacyl-tRNA synthetase family. Phe-tRNA synthetase alpha subunit type 1 subfamily.</text>
</comment>
<gene>
    <name evidence="1" type="primary">pheS</name>
    <name type="ordered locus">Daci_4612</name>
</gene>
<keyword id="KW-0030">Aminoacyl-tRNA synthetase</keyword>
<keyword id="KW-0067">ATP-binding</keyword>
<keyword id="KW-0963">Cytoplasm</keyword>
<keyword id="KW-0436">Ligase</keyword>
<keyword id="KW-0460">Magnesium</keyword>
<keyword id="KW-0479">Metal-binding</keyword>
<keyword id="KW-0547">Nucleotide-binding</keyword>
<keyword id="KW-0648">Protein biosynthesis</keyword>
<keyword id="KW-1185">Reference proteome</keyword>
<dbReference type="EC" id="6.1.1.20" evidence="1"/>
<dbReference type="EMBL" id="CP000884">
    <property type="protein sequence ID" value="ABX37241.1"/>
    <property type="molecule type" value="Genomic_DNA"/>
</dbReference>
<dbReference type="RefSeq" id="WP_012206411.1">
    <property type="nucleotide sequence ID" value="NC_010002.1"/>
</dbReference>
<dbReference type="SMR" id="A9C3D0"/>
<dbReference type="STRING" id="398578.Daci_4612"/>
<dbReference type="GeneID" id="94691502"/>
<dbReference type="KEGG" id="dac:Daci_4612"/>
<dbReference type="eggNOG" id="COG0016">
    <property type="taxonomic scope" value="Bacteria"/>
</dbReference>
<dbReference type="HOGENOM" id="CLU_025086_0_1_4"/>
<dbReference type="Proteomes" id="UP000000784">
    <property type="component" value="Chromosome"/>
</dbReference>
<dbReference type="GO" id="GO:0005737">
    <property type="term" value="C:cytoplasm"/>
    <property type="evidence" value="ECO:0007669"/>
    <property type="project" value="UniProtKB-SubCell"/>
</dbReference>
<dbReference type="GO" id="GO:0005524">
    <property type="term" value="F:ATP binding"/>
    <property type="evidence" value="ECO:0007669"/>
    <property type="project" value="UniProtKB-UniRule"/>
</dbReference>
<dbReference type="GO" id="GO:0000287">
    <property type="term" value="F:magnesium ion binding"/>
    <property type="evidence" value="ECO:0007669"/>
    <property type="project" value="UniProtKB-UniRule"/>
</dbReference>
<dbReference type="GO" id="GO:0004826">
    <property type="term" value="F:phenylalanine-tRNA ligase activity"/>
    <property type="evidence" value="ECO:0007669"/>
    <property type="project" value="UniProtKB-UniRule"/>
</dbReference>
<dbReference type="GO" id="GO:0000049">
    <property type="term" value="F:tRNA binding"/>
    <property type="evidence" value="ECO:0007669"/>
    <property type="project" value="InterPro"/>
</dbReference>
<dbReference type="GO" id="GO:0006432">
    <property type="term" value="P:phenylalanyl-tRNA aminoacylation"/>
    <property type="evidence" value="ECO:0007669"/>
    <property type="project" value="UniProtKB-UniRule"/>
</dbReference>
<dbReference type="CDD" id="cd00496">
    <property type="entry name" value="PheRS_alpha_core"/>
    <property type="match status" value="1"/>
</dbReference>
<dbReference type="Gene3D" id="3.30.930.10">
    <property type="entry name" value="Bira Bifunctional Protein, Domain 2"/>
    <property type="match status" value="1"/>
</dbReference>
<dbReference type="HAMAP" id="MF_00281">
    <property type="entry name" value="Phe_tRNA_synth_alpha1"/>
    <property type="match status" value="1"/>
</dbReference>
<dbReference type="InterPro" id="IPR006195">
    <property type="entry name" value="aa-tRNA-synth_II"/>
</dbReference>
<dbReference type="InterPro" id="IPR045864">
    <property type="entry name" value="aa-tRNA-synth_II/BPL/LPL"/>
</dbReference>
<dbReference type="InterPro" id="IPR004529">
    <property type="entry name" value="Phe-tRNA-synth_IIc_asu"/>
</dbReference>
<dbReference type="InterPro" id="IPR004188">
    <property type="entry name" value="Phe-tRNA_ligase_II_N"/>
</dbReference>
<dbReference type="InterPro" id="IPR022911">
    <property type="entry name" value="Phe_tRNA_ligase_alpha1_bac"/>
</dbReference>
<dbReference type="InterPro" id="IPR002319">
    <property type="entry name" value="Phenylalanyl-tRNA_Synthase"/>
</dbReference>
<dbReference type="InterPro" id="IPR010978">
    <property type="entry name" value="tRNA-bd_arm"/>
</dbReference>
<dbReference type="NCBIfam" id="TIGR00468">
    <property type="entry name" value="pheS"/>
    <property type="match status" value="1"/>
</dbReference>
<dbReference type="PANTHER" id="PTHR11538:SF41">
    <property type="entry name" value="PHENYLALANINE--TRNA LIGASE, MITOCHONDRIAL"/>
    <property type="match status" value="1"/>
</dbReference>
<dbReference type="PANTHER" id="PTHR11538">
    <property type="entry name" value="PHENYLALANYL-TRNA SYNTHETASE"/>
    <property type="match status" value="1"/>
</dbReference>
<dbReference type="Pfam" id="PF02912">
    <property type="entry name" value="Phe_tRNA-synt_N"/>
    <property type="match status" value="1"/>
</dbReference>
<dbReference type="Pfam" id="PF01409">
    <property type="entry name" value="tRNA-synt_2d"/>
    <property type="match status" value="1"/>
</dbReference>
<dbReference type="SUPFAM" id="SSF55681">
    <property type="entry name" value="Class II aaRS and biotin synthetases"/>
    <property type="match status" value="1"/>
</dbReference>
<dbReference type="SUPFAM" id="SSF46589">
    <property type="entry name" value="tRNA-binding arm"/>
    <property type="match status" value="1"/>
</dbReference>
<dbReference type="PROSITE" id="PS50862">
    <property type="entry name" value="AA_TRNA_LIGASE_II"/>
    <property type="match status" value="1"/>
</dbReference>
<reference key="1">
    <citation type="submission" date="2007-11" db="EMBL/GenBank/DDBJ databases">
        <title>Complete sequence of Delftia acidovorans DSM 14801 / SPH-1.</title>
        <authorList>
            <person name="Copeland A."/>
            <person name="Lucas S."/>
            <person name="Lapidus A."/>
            <person name="Barry K."/>
            <person name="Glavina del Rio T."/>
            <person name="Dalin E."/>
            <person name="Tice H."/>
            <person name="Pitluck S."/>
            <person name="Lowry S."/>
            <person name="Clum A."/>
            <person name="Schmutz J."/>
            <person name="Larimer F."/>
            <person name="Land M."/>
            <person name="Hauser L."/>
            <person name="Kyrpides N."/>
            <person name="Kim E."/>
            <person name="Schleheck D."/>
            <person name="Richardson P."/>
        </authorList>
    </citation>
    <scope>NUCLEOTIDE SEQUENCE [LARGE SCALE GENOMIC DNA]</scope>
    <source>
        <strain>DSM 14801 / SPH-1</strain>
    </source>
</reference>
<name>SYFA_DELAS</name>
<feature type="chain" id="PRO_1000114865" description="Phenylalanine--tRNA ligase alpha subunit">
    <location>
        <begin position="1"/>
        <end position="350"/>
    </location>
</feature>
<feature type="binding site" evidence="1">
    <location>
        <position position="271"/>
    </location>
    <ligand>
        <name>Mg(2+)</name>
        <dbReference type="ChEBI" id="CHEBI:18420"/>
        <note>shared with beta subunit</note>
    </ligand>
</feature>
<evidence type="ECO:0000255" key="1">
    <source>
        <dbReference type="HAMAP-Rule" id="MF_00281"/>
    </source>
</evidence>